<reference key="1">
    <citation type="journal article" date="2004" name="Science">
        <title>The complete genome sequence of Propionibacterium acnes, a commensal of human skin.</title>
        <authorList>
            <person name="Brueggemann H."/>
            <person name="Henne A."/>
            <person name="Hoster F."/>
            <person name="Liesegang H."/>
            <person name="Wiezer A."/>
            <person name="Strittmatter A."/>
            <person name="Hujer S."/>
            <person name="Duerre P."/>
            <person name="Gottschalk G."/>
        </authorList>
    </citation>
    <scope>NUCLEOTIDE SEQUENCE [LARGE SCALE GENOMIC DNA]</scope>
    <source>
        <strain>DSM 16379 / KPA171202</strain>
    </source>
</reference>
<feature type="chain" id="PRO_0000242414" description="Large ribosomal subunit protein uL4">
    <location>
        <begin position="1"/>
        <end position="301"/>
    </location>
</feature>
<feature type="region of interest" description="Large ribosomal subunit protein uL4">
    <location>
        <begin position="1"/>
        <end position="223"/>
    </location>
</feature>
<feature type="region of interest" description="Disordered" evidence="2">
    <location>
        <begin position="49"/>
        <end position="105"/>
    </location>
</feature>
<feature type="region of interest" description="Unknown">
    <location>
        <begin position="224"/>
        <end position="301"/>
    </location>
</feature>
<feature type="strand" evidence="3">
    <location>
        <begin position="7"/>
        <end position="11"/>
    </location>
</feature>
<feature type="helix" evidence="3">
    <location>
        <begin position="13"/>
        <end position="15"/>
    </location>
</feature>
<feature type="strand" evidence="3">
    <location>
        <begin position="19"/>
        <end position="22"/>
    </location>
</feature>
<feature type="strand" evidence="3">
    <location>
        <begin position="27"/>
        <end position="29"/>
    </location>
</feature>
<feature type="helix" evidence="3">
    <location>
        <begin position="33"/>
        <end position="47"/>
    </location>
</feature>
<feature type="turn" evidence="3">
    <location>
        <begin position="57"/>
        <end position="59"/>
    </location>
</feature>
<feature type="strand" evidence="3">
    <location>
        <begin position="70"/>
        <end position="75"/>
    </location>
</feature>
<feature type="helix" evidence="3">
    <location>
        <begin position="106"/>
        <end position="122"/>
    </location>
</feature>
<feature type="strand" evidence="3">
    <location>
        <begin position="126"/>
        <end position="130"/>
    </location>
</feature>
<feature type="helix" evidence="3">
    <location>
        <begin position="139"/>
        <end position="149"/>
    </location>
</feature>
<feature type="strand" evidence="3">
    <location>
        <begin position="154"/>
        <end position="157"/>
    </location>
</feature>
<feature type="turn" evidence="3">
    <location>
        <begin position="161"/>
        <end position="163"/>
    </location>
</feature>
<feature type="helix" evidence="3">
    <location>
        <begin position="165"/>
        <end position="171"/>
    </location>
</feature>
<feature type="strand" evidence="3">
    <location>
        <begin position="175"/>
        <end position="180"/>
    </location>
</feature>
<feature type="helix" evidence="3">
    <location>
        <begin position="182"/>
        <end position="184"/>
    </location>
</feature>
<feature type="helix" evidence="3">
    <location>
        <begin position="187"/>
        <end position="192"/>
    </location>
</feature>
<feature type="strand" evidence="3">
    <location>
        <begin position="194"/>
        <end position="199"/>
    </location>
</feature>
<feature type="helix" evidence="3">
    <location>
        <begin position="200"/>
        <end position="209"/>
    </location>
</feature>
<organism>
    <name type="scientific">Cutibacterium acnes (strain DSM 16379 / KPA171202)</name>
    <name type="common">Propionibacterium acnes</name>
    <dbReference type="NCBI Taxonomy" id="267747"/>
    <lineage>
        <taxon>Bacteria</taxon>
        <taxon>Bacillati</taxon>
        <taxon>Actinomycetota</taxon>
        <taxon>Actinomycetes</taxon>
        <taxon>Propionibacteriales</taxon>
        <taxon>Propionibacteriaceae</taxon>
        <taxon>Cutibacterium</taxon>
    </lineage>
</organism>
<keyword id="KW-0002">3D-structure</keyword>
<keyword id="KW-0687">Ribonucleoprotein</keyword>
<keyword id="KW-0689">Ribosomal protein</keyword>
<keyword id="KW-0694">RNA-binding</keyword>
<keyword id="KW-0699">rRNA-binding</keyword>
<sequence length="301" mass="32297">MNETKTIDVLDVKGKKAGSAELPGDLFDVNTNIPLIHQVVVAQLAAARQGTHATKTRGQVSGGGKKPWRQKGTGRARQGSTRAPQWVGGGTVHGPQPRSYAQRTPKKMVGAALRGALSDMARDNRIFVVTSLVDGDKPSTKQAKAVLSGLAELRKVLVVLDRSDEIDWLSVRNLSEVHVLAADQLNTYDVVNARTIVFSQAGLDAFVGARSANTQALSAQPEVPETNVADQHPYGEDSFRGDNPPAGFDIKGNEDSMKFHEPSSPWYGRTIAEVWFRSAAAAEAAGFVNAVKSDSEKEDAK</sequence>
<protein>
    <recommendedName>
        <fullName evidence="1">Large ribosomal subunit protein uL4</fullName>
    </recommendedName>
    <alternativeName>
        <fullName>50S ribosomal protein L4</fullName>
    </alternativeName>
</protein>
<name>RL4_CUTAK</name>
<evidence type="ECO:0000255" key="1">
    <source>
        <dbReference type="HAMAP-Rule" id="MF_01328"/>
    </source>
</evidence>
<evidence type="ECO:0000256" key="2">
    <source>
        <dbReference type="SAM" id="MobiDB-lite"/>
    </source>
</evidence>
<evidence type="ECO:0007829" key="3">
    <source>
        <dbReference type="PDB" id="8CVM"/>
    </source>
</evidence>
<comment type="function">
    <text evidence="1">One of the primary rRNA binding proteins, this protein initially binds near the 5'-end of the 23S rRNA. It is important during the early stages of 50S assembly. It makes multiple contacts with different domains of the 23S rRNA in the assembled 50S subunit and ribosome.</text>
</comment>
<comment type="function">
    <text evidence="1">Forms part of the polypeptide exit tunnel.</text>
</comment>
<comment type="subunit">
    <text evidence="1">Part of the 50S ribosomal subunit.</text>
</comment>
<comment type="similarity">
    <text evidence="1">Belongs to the universal ribosomal protein uL4 family.</text>
</comment>
<dbReference type="EMBL" id="AE017283">
    <property type="protein sequence ID" value="AAT83586.1"/>
    <property type="molecule type" value="Genomic_DNA"/>
</dbReference>
<dbReference type="RefSeq" id="WP_002531292.1">
    <property type="nucleotide sequence ID" value="NZ_CP025935.1"/>
</dbReference>
<dbReference type="PDB" id="8CVM">
    <property type="method" value="EM"/>
    <property type="resolution" value="2.66 A"/>
    <property type="chains" value="e=1-301"/>
</dbReference>
<dbReference type="PDBsum" id="8CVM"/>
<dbReference type="SMR" id="Q6A6M7"/>
<dbReference type="EnsemblBacteria" id="AAT83586">
    <property type="protein sequence ID" value="AAT83586"/>
    <property type="gene ID" value="PPA1862"/>
</dbReference>
<dbReference type="KEGG" id="pac:PPA1862"/>
<dbReference type="PATRIC" id="fig|267747.3.peg.1918"/>
<dbReference type="eggNOG" id="COG0088">
    <property type="taxonomic scope" value="Bacteria"/>
</dbReference>
<dbReference type="HOGENOM" id="CLU_041575_5_0_11"/>
<dbReference type="Proteomes" id="UP000000603">
    <property type="component" value="Chromosome"/>
</dbReference>
<dbReference type="GO" id="GO:1990904">
    <property type="term" value="C:ribonucleoprotein complex"/>
    <property type="evidence" value="ECO:0007669"/>
    <property type="project" value="UniProtKB-KW"/>
</dbReference>
<dbReference type="GO" id="GO:0005840">
    <property type="term" value="C:ribosome"/>
    <property type="evidence" value="ECO:0007669"/>
    <property type="project" value="UniProtKB-KW"/>
</dbReference>
<dbReference type="GO" id="GO:0019843">
    <property type="term" value="F:rRNA binding"/>
    <property type="evidence" value="ECO:0007669"/>
    <property type="project" value="UniProtKB-UniRule"/>
</dbReference>
<dbReference type="GO" id="GO:0003735">
    <property type="term" value="F:structural constituent of ribosome"/>
    <property type="evidence" value="ECO:0007669"/>
    <property type="project" value="InterPro"/>
</dbReference>
<dbReference type="GO" id="GO:0006412">
    <property type="term" value="P:translation"/>
    <property type="evidence" value="ECO:0007669"/>
    <property type="project" value="UniProtKB-UniRule"/>
</dbReference>
<dbReference type="FunFam" id="3.40.1370.10:FF:000004">
    <property type="entry name" value="50S ribosomal protein L4"/>
    <property type="match status" value="1"/>
</dbReference>
<dbReference type="Gene3D" id="3.40.1370.10">
    <property type="match status" value="1"/>
</dbReference>
<dbReference type="HAMAP" id="MF_01328_B">
    <property type="entry name" value="Ribosomal_uL4_B"/>
    <property type="match status" value="1"/>
</dbReference>
<dbReference type="InterPro" id="IPR002136">
    <property type="entry name" value="Ribosomal_uL4"/>
</dbReference>
<dbReference type="InterPro" id="IPR013005">
    <property type="entry name" value="Ribosomal_uL4-like"/>
</dbReference>
<dbReference type="InterPro" id="IPR023574">
    <property type="entry name" value="Ribosomal_uL4_dom_sf"/>
</dbReference>
<dbReference type="NCBIfam" id="TIGR03953">
    <property type="entry name" value="rplD_bact"/>
    <property type="match status" value="1"/>
</dbReference>
<dbReference type="PANTHER" id="PTHR10746">
    <property type="entry name" value="50S RIBOSOMAL PROTEIN L4"/>
    <property type="match status" value="1"/>
</dbReference>
<dbReference type="PANTHER" id="PTHR10746:SF6">
    <property type="entry name" value="LARGE RIBOSOMAL SUBUNIT PROTEIN UL4M"/>
    <property type="match status" value="1"/>
</dbReference>
<dbReference type="Pfam" id="PF00573">
    <property type="entry name" value="Ribosomal_L4"/>
    <property type="match status" value="1"/>
</dbReference>
<dbReference type="SUPFAM" id="SSF52166">
    <property type="entry name" value="Ribosomal protein L4"/>
    <property type="match status" value="1"/>
</dbReference>
<proteinExistence type="evidence at protein level"/>
<gene>
    <name evidence="1" type="primary">rplD</name>
    <name type="ordered locus">PPA1862</name>
</gene>
<accession>Q6A6M7</accession>